<proteinExistence type="evidence at protein level"/>
<keyword id="KW-0378">Hydrolase</keyword>
<keyword id="KW-0442">Lipid degradation</keyword>
<keyword id="KW-0551">Lipid droplet</keyword>
<keyword id="KW-0443">Lipid metabolism</keyword>
<keyword id="KW-0472">Membrane</keyword>
<keyword id="KW-1267">Proteomics identification</keyword>
<keyword id="KW-1185">Reference proteome</keyword>
<keyword id="KW-0812">Transmembrane</keyword>
<keyword id="KW-1133">Transmembrane helix</keyword>
<organism>
    <name type="scientific">Homo sapiens</name>
    <name type="common">Human</name>
    <dbReference type="NCBI Taxonomy" id="9606"/>
    <lineage>
        <taxon>Eukaryota</taxon>
        <taxon>Metazoa</taxon>
        <taxon>Chordata</taxon>
        <taxon>Craniata</taxon>
        <taxon>Vertebrata</taxon>
        <taxon>Euteleostomi</taxon>
        <taxon>Mammalia</taxon>
        <taxon>Eutheria</taxon>
        <taxon>Euarchontoglires</taxon>
        <taxon>Primates</taxon>
        <taxon>Haplorrhini</taxon>
        <taxon>Catarrhini</taxon>
        <taxon>Hominidae</taxon>
        <taxon>Homo</taxon>
    </lineage>
</organism>
<evidence type="ECO:0000250" key="1"/>
<evidence type="ECO:0000255" key="2"/>
<evidence type="ECO:0000269" key="3">
    <source>
    </source>
</evidence>
<evidence type="ECO:0000269" key="4">
    <source>
    </source>
</evidence>
<evidence type="ECO:0000305" key="5"/>
<evidence type="ECO:0000305" key="6">
    <source>
    </source>
</evidence>
<evidence type="ECO:0000305" key="7">
    <source>
    </source>
</evidence>
<dbReference type="EC" id="3.5.1.99" evidence="3 4"/>
<dbReference type="EMBL" id="AK055766">
    <property type="protein sequence ID" value="BAB71007.1"/>
    <property type="molecule type" value="mRNA"/>
</dbReference>
<dbReference type="EMBL" id="AL928898">
    <property type="status" value="NOT_ANNOTATED_CDS"/>
    <property type="molecule type" value="Genomic_DNA"/>
</dbReference>
<dbReference type="EMBL" id="AL590394">
    <property type="status" value="NOT_ANNOTATED_CDS"/>
    <property type="molecule type" value="Genomic_DNA"/>
</dbReference>
<dbReference type="EMBL" id="AL606754">
    <property type="status" value="NOT_ANNOTATED_CDS"/>
    <property type="molecule type" value="Genomic_DNA"/>
</dbReference>
<dbReference type="EMBL" id="Z83745">
    <property type="status" value="NOT_ANNOTATED_CDS"/>
    <property type="molecule type" value="Genomic_DNA"/>
</dbReference>
<dbReference type="EMBL" id="BC048279">
    <property type="protein sequence ID" value="AAH48279.1"/>
    <property type="molecule type" value="mRNA"/>
</dbReference>
<dbReference type="EMBL" id="BC073922">
    <property type="protein sequence ID" value="AAH73922.1"/>
    <property type="molecule type" value="mRNA"/>
</dbReference>
<dbReference type="CCDS" id="CCDS14375.1"/>
<dbReference type="RefSeq" id="NP_777572.2">
    <property type="nucleotide sequence ID" value="NM_174912.4"/>
</dbReference>
<dbReference type="SMR" id="Q6GMR7"/>
<dbReference type="BioGRID" id="127693">
    <property type="interactions" value="5"/>
</dbReference>
<dbReference type="FunCoup" id="Q6GMR7">
    <property type="interactions" value="10"/>
</dbReference>
<dbReference type="STRING" id="9606.ENSP00000364035"/>
<dbReference type="BindingDB" id="Q6GMR7"/>
<dbReference type="ChEMBL" id="CHEMBL1628475"/>
<dbReference type="GuidetoPHARMACOLOGY" id="1401"/>
<dbReference type="SwissLipids" id="SLP:000001059"/>
<dbReference type="iPTMnet" id="Q6GMR7"/>
<dbReference type="PhosphoSitePlus" id="Q6GMR7"/>
<dbReference type="BioMuta" id="FAAH2"/>
<dbReference type="DMDM" id="74757585"/>
<dbReference type="jPOST" id="Q6GMR7"/>
<dbReference type="MassIVE" id="Q6GMR7"/>
<dbReference type="PaxDb" id="9606-ENSP00000364035"/>
<dbReference type="PeptideAtlas" id="Q6GMR7"/>
<dbReference type="ProteomicsDB" id="66301"/>
<dbReference type="Antibodypedia" id="13026">
    <property type="antibodies" value="137 antibodies from 23 providers"/>
</dbReference>
<dbReference type="DNASU" id="158584"/>
<dbReference type="Ensembl" id="ENST00000374900.5">
    <property type="protein sequence ID" value="ENSP00000364035.4"/>
    <property type="gene ID" value="ENSG00000165591.7"/>
</dbReference>
<dbReference type="GeneID" id="158584"/>
<dbReference type="KEGG" id="hsa:158584"/>
<dbReference type="MANE-Select" id="ENST00000374900.5">
    <property type="protein sequence ID" value="ENSP00000364035.4"/>
    <property type="RefSeq nucleotide sequence ID" value="NM_174912.4"/>
    <property type="RefSeq protein sequence ID" value="NP_777572.2"/>
</dbReference>
<dbReference type="UCSC" id="uc004dvc.4">
    <property type="organism name" value="human"/>
</dbReference>
<dbReference type="AGR" id="HGNC:26440"/>
<dbReference type="CTD" id="158584"/>
<dbReference type="DisGeNET" id="158584"/>
<dbReference type="GeneCards" id="FAAH2"/>
<dbReference type="HGNC" id="HGNC:26440">
    <property type="gene designation" value="FAAH2"/>
</dbReference>
<dbReference type="HPA" id="ENSG00000165591">
    <property type="expression patterns" value="Low tissue specificity"/>
</dbReference>
<dbReference type="MalaCards" id="FAAH2"/>
<dbReference type="MIM" id="300654">
    <property type="type" value="gene"/>
</dbReference>
<dbReference type="neXtProt" id="NX_Q6GMR7"/>
<dbReference type="OpenTargets" id="ENSG00000165591"/>
<dbReference type="PharmGKB" id="PA162385543"/>
<dbReference type="VEuPathDB" id="HostDB:ENSG00000165591"/>
<dbReference type="eggNOG" id="KOG1212">
    <property type="taxonomic scope" value="Eukaryota"/>
</dbReference>
<dbReference type="GeneTree" id="ENSGT00940000162502"/>
<dbReference type="HOGENOM" id="CLU_009600_16_1_1"/>
<dbReference type="InParanoid" id="Q6GMR7"/>
<dbReference type="OMA" id="LPTTWGM"/>
<dbReference type="OrthoDB" id="6428749at2759"/>
<dbReference type="PAN-GO" id="Q6GMR7">
    <property type="GO annotations" value="0 GO annotations based on evolutionary models"/>
</dbReference>
<dbReference type="PhylomeDB" id="Q6GMR7"/>
<dbReference type="TreeFam" id="TF313781"/>
<dbReference type="BioCyc" id="MetaCyc:HS09254-MONOMER"/>
<dbReference type="BRENDA" id="3.5.1.4">
    <property type="organism ID" value="2681"/>
</dbReference>
<dbReference type="BRENDA" id="3.5.1.99">
    <property type="organism ID" value="2681"/>
</dbReference>
<dbReference type="PathwayCommons" id="Q6GMR7"/>
<dbReference type="Reactome" id="R-HSA-2142753">
    <property type="pathway name" value="Arachidonate metabolism"/>
</dbReference>
<dbReference type="BioGRID-ORCS" id="158584">
    <property type="hits" value="8 hits in 764 CRISPR screens"/>
</dbReference>
<dbReference type="ChiTaRS" id="FAAH2">
    <property type="organism name" value="human"/>
</dbReference>
<dbReference type="GenomeRNAi" id="158584"/>
<dbReference type="Pharos" id="Q6GMR7">
    <property type="development level" value="Tchem"/>
</dbReference>
<dbReference type="PRO" id="PR:Q6GMR7"/>
<dbReference type="Proteomes" id="UP000005640">
    <property type="component" value="Chromosome X"/>
</dbReference>
<dbReference type="RNAct" id="Q6GMR7">
    <property type="molecule type" value="protein"/>
</dbReference>
<dbReference type="Bgee" id="ENSG00000165591">
    <property type="expression patterns" value="Expressed in right uterine tube and 132 other cell types or tissues"/>
</dbReference>
<dbReference type="ExpressionAtlas" id="Q6GMR7">
    <property type="expression patterns" value="baseline and differential"/>
</dbReference>
<dbReference type="GO" id="GO:0005811">
    <property type="term" value="C:lipid droplet"/>
    <property type="evidence" value="ECO:0000304"/>
    <property type="project" value="Reactome"/>
</dbReference>
<dbReference type="GO" id="GO:0016020">
    <property type="term" value="C:membrane"/>
    <property type="evidence" value="ECO:0007669"/>
    <property type="project" value="UniProtKB-SubCell"/>
</dbReference>
<dbReference type="GO" id="GO:0017064">
    <property type="term" value="F:fatty acid amide hydrolase activity"/>
    <property type="evidence" value="ECO:0000269"/>
    <property type="project" value="Reactome"/>
</dbReference>
<dbReference type="GO" id="GO:0019369">
    <property type="term" value="P:arachidonate metabolic process"/>
    <property type="evidence" value="ECO:0000304"/>
    <property type="project" value="Reactome"/>
</dbReference>
<dbReference type="GO" id="GO:0016042">
    <property type="term" value="P:lipid catabolic process"/>
    <property type="evidence" value="ECO:0007669"/>
    <property type="project" value="UniProtKB-KW"/>
</dbReference>
<dbReference type="FunFam" id="3.90.1300.10:FF:000005">
    <property type="entry name" value="Fatty-acid amide hydrolase 2"/>
    <property type="match status" value="1"/>
</dbReference>
<dbReference type="Gene3D" id="3.90.1300.10">
    <property type="entry name" value="Amidase signature (AS) domain"/>
    <property type="match status" value="1"/>
</dbReference>
<dbReference type="InterPro" id="IPR020556">
    <property type="entry name" value="Amidase_CS"/>
</dbReference>
<dbReference type="InterPro" id="IPR023631">
    <property type="entry name" value="Amidase_dom"/>
</dbReference>
<dbReference type="InterPro" id="IPR036928">
    <property type="entry name" value="AS_sf"/>
</dbReference>
<dbReference type="InterPro" id="IPR052739">
    <property type="entry name" value="FAAH2"/>
</dbReference>
<dbReference type="PANTHER" id="PTHR43372">
    <property type="entry name" value="FATTY-ACID AMIDE HYDROLASE"/>
    <property type="match status" value="1"/>
</dbReference>
<dbReference type="PANTHER" id="PTHR43372:SF4">
    <property type="entry name" value="FATTY-ACID AMIDE HYDROLASE 2"/>
    <property type="match status" value="1"/>
</dbReference>
<dbReference type="Pfam" id="PF01425">
    <property type="entry name" value="Amidase"/>
    <property type="match status" value="1"/>
</dbReference>
<dbReference type="PIRSF" id="PIRSF001221">
    <property type="entry name" value="Amidase_fungi"/>
    <property type="match status" value="1"/>
</dbReference>
<dbReference type="SUPFAM" id="SSF75304">
    <property type="entry name" value="Amidase signature (AS) enzymes"/>
    <property type="match status" value="1"/>
</dbReference>
<dbReference type="PROSITE" id="PS00571">
    <property type="entry name" value="AMIDASES"/>
    <property type="match status" value="1"/>
</dbReference>
<protein>
    <recommendedName>
        <fullName>Fatty-acid amide hydrolase 2</fullName>
        <ecNumber evidence="3 4">3.5.1.99</ecNumber>
    </recommendedName>
    <alternativeName>
        <fullName>Amidase domain-containing protein</fullName>
    </alternativeName>
    <alternativeName>
        <fullName>Anandamide amidohydrolase 2</fullName>
    </alternativeName>
    <alternativeName>
        <fullName>Oleamide hydrolase 2</fullName>
    </alternativeName>
</protein>
<reference key="1">
    <citation type="journal article" date="2004" name="Nat. Genet.">
        <title>Complete sequencing and characterization of 21,243 full-length human cDNAs.</title>
        <authorList>
            <person name="Ota T."/>
            <person name="Suzuki Y."/>
            <person name="Nishikawa T."/>
            <person name="Otsuki T."/>
            <person name="Sugiyama T."/>
            <person name="Irie R."/>
            <person name="Wakamatsu A."/>
            <person name="Hayashi K."/>
            <person name="Sato H."/>
            <person name="Nagai K."/>
            <person name="Kimura K."/>
            <person name="Makita H."/>
            <person name="Sekine M."/>
            <person name="Obayashi M."/>
            <person name="Nishi T."/>
            <person name="Shibahara T."/>
            <person name="Tanaka T."/>
            <person name="Ishii S."/>
            <person name="Yamamoto J."/>
            <person name="Saito K."/>
            <person name="Kawai Y."/>
            <person name="Isono Y."/>
            <person name="Nakamura Y."/>
            <person name="Nagahari K."/>
            <person name="Murakami K."/>
            <person name="Yasuda T."/>
            <person name="Iwayanagi T."/>
            <person name="Wagatsuma M."/>
            <person name="Shiratori A."/>
            <person name="Sudo H."/>
            <person name="Hosoiri T."/>
            <person name="Kaku Y."/>
            <person name="Kodaira H."/>
            <person name="Kondo H."/>
            <person name="Sugawara M."/>
            <person name="Takahashi M."/>
            <person name="Kanda K."/>
            <person name="Yokoi T."/>
            <person name="Furuya T."/>
            <person name="Kikkawa E."/>
            <person name="Omura Y."/>
            <person name="Abe K."/>
            <person name="Kamihara K."/>
            <person name="Katsuta N."/>
            <person name="Sato K."/>
            <person name="Tanikawa M."/>
            <person name="Yamazaki M."/>
            <person name="Ninomiya K."/>
            <person name="Ishibashi T."/>
            <person name="Yamashita H."/>
            <person name="Murakawa K."/>
            <person name="Fujimori K."/>
            <person name="Tanai H."/>
            <person name="Kimata M."/>
            <person name="Watanabe M."/>
            <person name="Hiraoka S."/>
            <person name="Chiba Y."/>
            <person name="Ishida S."/>
            <person name="Ono Y."/>
            <person name="Takiguchi S."/>
            <person name="Watanabe S."/>
            <person name="Yosida M."/>
            <person name="Hotuta T."/>
            <person name="Kusano J."/>
            <person name="Kanehori K."/>
            <person name="Takahashi-Fujii A."/>
            <person name="Hara H."/>
            <person name="Tanase T.-O."/>
            <person name="Nomura Y."/>
            <person name="Togiya S."/>
            <person name="Komai F."/>
            <person name="Hara R."/>
            <person name="Takeuchi K."/>
            <person name="Arita M."/>
            <person name="Imose N."/>
            <person name="Musashino K."/>
            <person name="Yuuki H."/>
            <person name="Oshima A."/>
            <person name="Sasaki N."/>
            <person name="Aotsuka S."/>
            <person name="Yoshikawa Y."/>
            <person name="Matsunawa H."/>
            <person name="Ichihara T."/>
            <person name="Shiohata N."/>
            <person name="Sano S."/>
            <person name="Moriya S."/>
            <person name="Momiyama H."/>
            <person name="Satoh N."/>
            <person name="Takami S."/>
            <person name="Terashima Y."/>
            <person name="Suzuki O."/>
            <person name="Nakagawa S."/>
            <person name="Senoh A."/>
            <person name="Mizoguchi H."/>
            <person name="Goto Y."/>
            <person name="Shimizu F."/>
            <person name="Wakebe H."/>
            <person name="Hishigaki H."/>
            <person name="Watanabe T."/>
            <person name="Sugiyama A."/>
            <person name="Takemoto M."/>
            <person name="Kawakami B."/>
            <person name="Yamazaki M."/>
            <person name="Watanabe K."/>
            <person name="Kumagai A."/>
            <person name="Itakura S."/>
            <person name="Fukuzumi Y."/>
            <person name="Fujimori Y."/>
            <person name="Komiyama M."/>
            <person name="Tashiro H."/>
            <person name="Tanigami A."/>
            <person name="Fujiwara T."/>
            <person name="Ono T."/>
            <person name="Yamada K."/>
            <person name="Fujii Y."/>
            <person name="Ozaki K."/>
            <person name="Hirao M."/>
            <person name="Ohmori Y."/>
            <person name="Kawabata A."/>
            <person name="Hikiji T."/>
            <person name="Kobatake N."/>
            <person name="Inagaki H."/>
            <person name="Ikema Y."/>
            <person name="Okamoto S."/>
            <person name="Okitani R."/>
            <person name="Kawakami T."/>
            <person name="Noguchi S."/>
            <person name="Itoh T."/>
            <person name="Shigeta K."/>
            <person name="Senba T."/>
            <person name="Matsumura K."/>
            <person name="Nakajima Y."/>
            <person name="Mizuno T."/>
            <person name="Morinaga M."/>
            <person name="Sasaki M."/>
            <person name="Togashi T."/>
            <person name="Oyama M."/>
            <person name="Hata H."/>
            <person name="Watanabe M."/>
            <person name="Komatsu T."/>
            <person name="Mizushima-Sugano J."/>
            <person name="Satoh T."/>
            <person name="Shirai Y."/>
            <person name="Takahashi Y."/>
            <person name="Nakagawa K."/>
            <person name="Okumura K."/>
            <person name="Nagase T."/>
            <person name="Nomura N."/>
            <person name="Kikuchi H."/>
            <person name="Masuho Y."/>
            <person name="Yamashita R."/>
            <person name="Nakai K."/>
            <person name="Yada T."/>
            <person name="Nakamura Y."/>
            <person name="Ohara O."/>
            <person name="Isogai T."/>
            <person name="Sugano S."/>
        </authorList>
    </citation>
    <scope>NUCLEOTIDE SEQUENCE [LARGE SCALE MRNA]</scope>
    <source>
        <tissue>Kidney</tissue>
    </source>
</reference>
<reference key="2">
    <citation type="journal article" date="2005" name="Nature">
        <title>The DNA sequence of the human X chromosome.</title>
        <authorList>
            <person name="Ross M.T."/>
            <person name="Grafham D.V."/>
            <person name="Coffey A.J."/>
            <person name="Scherer S."/>
            <person name="McLay K."/>
            <person name="Muzny D."/>
            <person name="Platzer M."/>
            <person name="Howell G.R."/>
            <person name="Burrows C."/>
            <person name="Bird C.P."/>
            <person name="Frankish A."/>
            <person name="Lovell F.L."/>
            <person name="Howe K.L."/>
            <person name="Ashurst J.L."/>
            <person name="Fulton R.S."/>
            <person name="Sudbrak R."/>
            <person name="Wen G."/>
            <person name="Jones M.C."/>
            <person name="Hurles M.E."/>
            <person name="Andrews T.D."/>
            <person name="Scott C.E."/>
            <person name="Searle S."/>
            <person name="Ramser J."/>
            <person name="Whittaker A."/>
            <person name="Deadman R."/>
            <person name="Carter N.P."/>
            <person name="Hunt S.E."/>
            <person name="Chen R."/>
            <person name="Cree A."/>
            <person name="Gunaratne P."/>
            <person name="Havlak P."/>
            <person name="Hodgson A."/>
            <person name="Metzker M.L."/>
            <person name="Richards S."/>
            <person name="Scott G."/>
            <person name="Steffen D."/>
            <person name="Sodergren E."/>
            <person name="Wheeler D.A."/>
            <person name="Worley K.C."/>
            <person name="Ainscough R."/>
            <person name="Ambrose K.D."/>
            <person name="Ansari-Lari M.A."/>
            <person name="Aradhya S."/>
            <person name="Ashwell R.I."/>
            <person name="Babbage A.K."/>
            <person name="Bagguley C.L."/>
            <person name="Ballabio A."/>
            <person name="Banerjee R."/>
            <person name="Barker G.E."/>
            <person name="Barlow K.F."/>
            <person name="Barrett I.P."/>
            <person name="Bates K.N."/>
            <person name="Beare D.M."/>
            <person name="Beasley H."/>
            <person name="Beasley O."/>
            <person name="Beck A."/>
            <person name="Bethel G."/>
            <person name="Blechschmidt K."/>
            <person name="Brady N."/>
            <person name="Bray-Allen S."/>
            <person name="Bridgeman A.M."/>
            <person name="Brown A.J."/>
            <person name="Brown M.J."/>
            <person name="Bonnin D."/>
            <person name="Bruford E.A."/>
            <person name="Buhay C."/>
            <person name="Burch P."/>
            <person name="Burford D."/>
            <person name="Burgess J."/>
            <person name="Burrill W."/>
            <person name="Burton J."/>
            <person name="Bye J.M."/>
            <person name="Carder C."/>
            <person name="Carrel L."/>
            <person name="Chako J."/>
            <person name="Chapman J.C."/>
            <person name="Chavez D."/>
            <person name="Chen E."/>
            <person name="Chen G."/>
            <person name="Chen Y."/>
            <person name="Chen Z."/>
            <person name="Chinault C."/>
            <person name="Ciccodicola A."/>
            <person name="Clark S.Y."/>
            <person name="Clarke G."/>
            <person name="Clee C.M."/>
            <person name="Clegg S."/>
            <person name="Clerc-Blankenburg K."/>
            <person name="Clifford K."/>
            <person name="Cobley V."/>
            <person name="Cole C.G."/>
            <person name="Conquer J.S."/>
            <person name="Corby N."/>
            <person name="Connor R.E."/>
            <person name="David R."/>
            <person name="Davies J."/>
            <person name="Davis C."/>
            <person name="Davis J."/>
            <person name="Delgado O."/>
            <person name="Deshazo D."/>
            <person name="Dhami P."/>
            <person name="Ding Y."/>
            <person name="Dinh H."/>
            <person name="Dodsworth S."/>
            <person name="Draper H."/>
            <person name="Dugan-Rocha S."/>
            <person name="Dunham A."/>
            <person name="Dunn M."/>
            <person name="Durbin K.J."/>
            <person name="Dutta I."/>
            <person name="Eades T."/>
            <person name="Ellwood M."/>
            <person name="Emery-Cohen A."/>
            <person name="Errington H."/>
            <person name="Evans K.L."/>
            <person name="Faulkner L."/>
            <person name="Francis F."/>
            <person name="Frankland J."/>
            <person name="Fraser A.E."/>
            <person name="Galgoczy P."/>
            <person name="Gilbert J."/>
            <person name="Gill R."/>
            <person name="Gloeckner G."/>
            <person name="Gregory S.G."/>
            <person name="Gribble S."/>
            <person name="Griffiths C."/>
            <person name="Grocock R."/>
            <person name="Gu Y."/>
            <person name="Gwilliam R."/>
            <person name="Hamilton C."/>
            <person name="Hart E.A."/>
            <person name="Hawes A."/>
            <person name="Heath P.D."/>
            <person name="Heitmann K."/>
            <person name="Hennig S."/>
            <person name="Hernandez J."/>
            <person name="Hinzmann B."/>
            <person name="Ho S."/>
            <person name="Hoffs M."/>
            <person name="Howden P.J."/>
            <person name="Huckle E.J."/>
            <person name="Hume J."/>
            <person name="Hunt P.J."/>
            <person name="Hunt A.R."/>
            <person name="Isherwood J."/>
            <person name="Jacob L."/>
            <person name="Johnson D."/>
            <person name="Jones S."/>
            <person name="de Jong P.J."/>
            <person name="Joseph S.S."/>
            <person name="Keenan S."/>
            <person name="Kelly S."/>
            <person name="Kershaw J.K."/>
            <person name="Khan Z."/>
            <person name="Kioschis P."/>
            <person name="Klages S."/>
            <person name="Knights A.J."/>
            <person name="Kosiura A."/>
            <person name="Kovar-Smith C."/>
            <person name="Laird G.K."/>
            <person name="Langford C."/>
            <person name="Lawlor S."/>
            <person name="Leversha M."/>
            <person name="Lewis L."/>
            <person name="Liu W."/>
            <person name="Lloyd C."/>
            <person name="Lloyd D.M."/>
            <person name="Loulseged H."/>
            <person name="Loveland J.E."/>
            <person name="Lovell J.D."/>
            <person name="Lozado R."/>
            <person name="Lu J."/>
            <person name="Lyne R."/>
            <person name="Ma J."/>
            <person name="Maheshwari M."/>
            <person name="Matthews L.H."/>
            <person name="McDowall J."/>
            <person name="McLaren S."/>
            <person name="McMurray A."/>
            <person name="Meidl P."/>
            <person name="Meitinger T."/>
            <person name="Milne S."/>
            <person name="Miner G."/>
            <person name="Mistry S.L."/>
            <person name="Morgan M."/>
            <person name="Morris S."/>
            <person name="Mueller I."/>
            <person name="Mullikin J.C."/>
            <person name="Nguyen N."/>
            <person name="Nordsiek G."/>
            <person name="Nyakatura G."/>
            <person name="O'dell C.N."/>
            <person name="Okwuonu G."/>
            <person name="Palmer S."/>
            <person name="Pandian R."/>
            <person name="Parker D."/>
            <person name="Parrish J."/>
            <person name="Pasternak S."/>
            <person name="Patel D."/>
            <person name="Pearce A.V."/>
            <person name="Pearson D.M."/>
            <person name="Pelan S.E."/>
            <person name="Perez L."/>
            <person name="Porter K.M."/>
            <person name="Ramsey Y."/>
            <person name="Reichwald K."/>
            <person name="Rhodes S."/>
            <person name="Ridler K.A."/>
            <person name="Schlessinger D."/>
            <person name="Schueler M.G."/>
            <person name="Sehra H.K."/>
            <person name="Shaw-Smith C."/>
            <person name="Shen H."/>
            <person name="Sheridan E.M."/>
            <person name="Shownkeen R."/>
            <person name="Skuce C.D."/>
            <person name="Smith M.L."/>
            <person name="Sotheran E.C."/>
            <person name="Steingruber H.E."/>
            <person name="Steward C.A."/>
            <person name="Storey R."/>
            <person name="Swann R.M."/>
            <person name="Swarbreck D."/>
            <person name="Tabor P.E."/>
            <person name="Taudien S."/>
            <person name="Taylor T."/>
            <person name="Teague B."/>
            <person name="Thomas K."/>
            <person name="Thorpe A."/>
            <person name="Timms K."/>
            <person name="Tracey A."/>
            <person name="Trevanion S."/>
            <person name="Tromans A.C."/>
            <person name="d'Urso M."/>
            <person name="Verduzco D."/>
            <person name="Villasana D."/>
            <person name="Waldron L."/>
            <person name="Wall M."/>
            <person name="Wang Q."/>
            <person name="Warren J."/>
            <person name="Warry G.L."/>
            <person name="Wei X."/>
            <person name="West A."/>
            <person name="Whitehead S.L."/>
            <person name="Whiteley M.N."/>
            <person name="Wilkinson J.E."/>
            <person name="Willey D.L."/>
            <person name="Williams G."/>
            <person name="Williams L."/>
            <person name="Williamson A."/>
            <person name="Williamson H."/>
            <person name="Wilming L."/>
            <person name="Woodmansey R.L."/>
            <person name="Wray P.W."/>
            <person name="Yen J."/>
            <person name="Zhang J."/>
            <person name="Zhou J."/>
            <person name="Zoghbi H."/>
            <person name="Zorilla S."/>
            <person name="Buck D."/>
            <person name="Reinhardt R."/>
            <person name="Poustka A."/>
            <person name="Rosenthal A."/>
            <person name="Lehrach H."/>
            <person name="Meindl A."/>
            <person name="Minx P.J."/>
            <person name="Hillier L.W."/>
            <person name="Willard H.F."/>
            <person name="Wilson R.K."/>
            <person name="Waterston R.H."/>
            <person name="Rice C.M."/>
            <person name="Vaudin M."/>
            <person name="Coulson A."/>
            <person name="Nelson D.L."/>
            <person name="Weinstock G."/>
            <person name="Sulston J.E."/>
            <person name="Durbin R.M."/>
            <person name="Hubbard T."/>
            <person name="Gibbs R.A."/>
            <person name="Beck S."/>
            <person name="Rogers J."/>
            <person name="Bentley D.R."/>
        </authorList>
    </citation>
    <scope>NUCLEOTIDE SEQUENCE [LARGE SCALE GENOMIC DNA]</scope>
</reference>
<reference key="3">
    <citation type="journal article" date="2004" name="Genome Res.">
        <title>The status, quality, and expansion of the NIH full-length cDNA project: the Mammalian Gene Collection (MGC).</title>
        <authorList>
            <consortium name="The MGC Project Team"/>
        </authorList>
    </citation>
    <scope>NUCLEOTIDE SEQUENCE [LARGE SCALE MRNA]</scope>
    <source>
        <tissue>Colon</tissue>
    </source>
</reference>
<reference key="4">
    <citation type="journal article" date="2006" name="J. Biol. Chem.">
        <title>A second fatty acid amide hydrolase with variable distribution among placental mammals.</title>
        <authorList>
            <person name="Wei B.Q."/>
            <person name="Mikkelsen T.S."/>
            <person name="McKinney M.K."/>
            <person name="Lander E.S."/>
            <person name="Cravatt B.F."/>
        </authorList>
    </citation>
    <scope>FUNCTION</scope>
    <scope>CATALYTIC ACTIVITY</scope>
    <scope>SUBCELLULAR LOCATION</scope>
    <scope>ACTIVITY REGULATION</scope>
    <scope>TISSUE SPECIFICITY</scope>
    <scope>BIOPHYSICOCHEMICAL PROPERTIES</scope>
</reference>
<reference key="5">
    <citation type="journal article" date="2010" name="J. Biol. Chem.">
        <title>Lipid droplets are novel sites of N-acylethanolamine inactivation by fatty acid amide hydrolase-2.</title>
        <authorList>
            <person name="Kaczocha M."/>
            <person name="Glaser S.T."/>
            <person name="Chae J."/>
            <person name="Brown D.A."/>
            <person name="Deutsch D.G."/>
        </authorList>
    </citation>
    <scope>FUNCTION</scope>
    <scope>CATALYTIC ACTIVITY</scope>
    <scope>SUBCELLULAR LOCATION</scope>
    <scope>BIOPHYSICOCHEMICAL PROPERTIES</scope>
</reference>
<sequence>MAPSFTARIQLFLLRALGFLIGLVGRAALVLGGPKFASKTPRPVTEPLLLLSGMQLAKLIRQRKVKCIDVVQAYINRIKDVNPMINGIVKYRFEEAMKEAHAVDQKLAEKQEDEATLENKWPFLGVPLTVKEAFQLQGMPNSSGLMNRRDAIAKTDATVVALLKGAGAIPLGITNCSELCMWYESSNKIYGRSNNPYDLQHIVGGSSGGEGCTLAAACSVIGVGSDIGGSIRMPAFFNGIFGHKPSPGVVPNKGQFPLAVGAQELFLCTGPMCRYAEDLAPMLKVMAGPGIKRLKLDTKVHLKDLKFYWMEHDGGSFLMSKVDQDLIMTQKKVVVHLETILGASVQHVKLKKMKYSFQLWIAMMSAKGHDGKEPVKFVDLLGDHGKHVSPLWELIKWCLGLSVYTIPSIGLALLEEKLRYSNEKYQKFKAVEESLRKELVDMLGDDGVFLYPSHPTVAPKHHVPLTRPFNFAYTGVFSALGLPVTQCPLGLNAKGLPLGIQVVAGPFNDHLTLAVAQYLEKTFGGWVCPGKF</sequence>
<accession>Q6GMR7</accession>
<accession>Q86VT2</accession>
<accession>Q96N98</accession>
<comment type="function">
    <text evidence="3 4">Catalyzes the hydrolysis of endogenous amidated lipids like the sleep-inducing lipid oleamide ((9Z)-octadecenamide), the endocannabinoid anandamide (N-(5Z,8Z,11Z,14Z-eicosatetraenoyl)-ethanolamine), as well as other fatty amides, to their corresponding fatty acids, thereby regulating the signaling functions of these molecules (PubMed:17015445, PubMed:19926788). Hydrolyzes monounsaturated substrate anandamide preferentially as compared to polyunsaturated substrates.</text>
</comment>
<comment type="catalytic activity">
    <reaction evidence="3 4">
        <text>N-(5Z,8Z,11Z,14Z-eicosatetraenoyl)-ethanolamine + H2O = ethanolamine + (5Z,8Z,11Z,14Z)-eicosatetraenoate</text>
        <dbReference type="Rhea" id="RHEA:26136"/>
        <dbReference type="ChEBI" id="CHEBI:2700"/>
        <dbReference type="ChEBI" id="CHEBI:15377"/>
        <dbReference type="ChEBI" id="CHEBI:32395"/>
        <dbReference type="ChEBI" id="CHEBI:57603"/>
        <dbReference type="EC" id="3.5.1.99"/>
    </reaction>
    <physiologicalReaction direction="left-to-right" evidence="3 4">
        <dbReference type="Rhea" id="RHEA:26137"/>
    </physiologicalReaction>
</comment>
<comment type="catalytic activity">
    <reaction evidence="3">
        <text>(9Z)-octadecenamide + H2O = (9Z)-octadecenoate + NH4(+)</text>
        <dbReference type="Rhea" id="RHEA:26506"/>
        <dbReference type="ChEBI" id="CHEBI:15377"/>
        <dbReference type="ChEBI" id="CHEBI:28938"/>
        <dbReference type="ChEBI" id="CHEBI:30823"/>
        <dbReference type="ChEBI" id="CHEBI:116314"/>
        <dbReference type="EC" id="3.5.1.99"/>
    </reaction>
    <physiologicalReaction direction="left-to-right" evidence="3">
        <dbReference type="Rhea" id="RHEA:26507"/>
    </physiologicalReaction>
</comment>
<comment type="catalytic activity">
    <reaction evidence="3">
        <text>N-(9Z-octadecenoyl) ethanolamine + H2O = ethanolamine + (9Z)-octadecenoate</text>
        <dbReference type="Rhea" id="RHEA:45060"/>
        <dbReference type="ChEBI" id="CHEBI:15377"/>
        <dbReference type="ChEBI" id="CHEBI:30823"/>
        <dbReference type="ChEBI" id="CHEBI:57603"/>
        <dbReference type="ChEBI" id="CHEBI:71466"/>
    </reaction>
    <physiologicalReaction direction="left-to-right" evidence="3">
        <dbReference type="Rhea" id="RHEA:45061"/>
    </physiologicalReaction>
</comment>
<comment type="catalytic activity">
    <reaction evidence="3 4">
        <text>N-hexadecanoylethanolamine + H2O = ethanolamine + hexadecanoate</text>
        <dbReference type="Rhea" id="RHEA:45064"/>
        <dbReference type="ChEBI" id="CHEBI:7896"/>
        <dbReference type="ChEBI" id="CHEBI:15377"/>
        <dbReference type="ChEBI" id="CHEBI:57603"/>
        <dbReference type="ChEBI" id="CHEBI:71464"/>
    </reaction>
    <physiologicalReaction direction="left-to-right" evidence="3 4">
        <dbReference type="Rhea" id="RHEA:45065"/>
    </physiologicalReaction>
</comment>
<comment type="activity regulation">
    <text evidence="3">Inhibited by O-aryl carbamates and alpha-keto heterocytes.</text>
</comment>
<comment type="biophysicochemical properties">
    <kinetics>
        <KM evidence="4">7.9 uM for anandamide (N-(5Z,8Z,11Z,14Z-eicosatetraenoyl)-ethanolamine)</KM>
        <KM evidence="4">4.3 uM for palmitoylethanolamine (N-hexadecanoylethanolamine)</KM>
        <Vmax evidence="3">0.2 nmol/min/mg enzyme for palmitoylethanolamine (N-hexadecanoylethanolamine) (at pH 9.0)</Vmax>
        <Vmax evidence="4">1.21 nmol/min/mg enzyme for palmitoylethanolamine (N-hexadecanoylethanolamine) (at pH 9.0)</Vmax>
        <Vmax evidence="3">0.46 nmol/min/mg enzyme for anandamide (N-(5Z,8Z,11Z,14Z-eicosatetraenoyl)-ethanolamine) (at pH 9.0)</Vmax>
        <Vmax evidence="4">0.71 nmol/min/mg enzyme for anandamide (N-(5Z,8Z,11Z,14Z-eicosatetraenoyl)-ethanolamine) (at pH 9.0)</Vmax>
    </kinetics>
    <phDependence>
        <text evidence="3">Optimum pH is around 9.0.</text>
    </phDependence>
</comment>
<comment type="subunit">
    <text evidence="1">Homodimer.</text>
</comment>
<comment type="subcellular location">
    <subcellularLocation>
        <location evidence="6">Membrane</location>
        <topology evidence="5">Single-pass membrane protein</topology>
    </subcellularLocation>
    <subcellularLocation>
        <location evidence="4">Lipid droplet</location>
    </subcellularLocation>
</comment>
<comment type="tissue specificity">
    <text evidence="3 7">Expressed in kidney, liver, lung, prostate, heart and ovary.</text>
</comment>
<comment type="similarity">
    <text evidence="5">Belongs to the amidase family.</text>
</comment>
<feature type="chain" id="PRO_0000291993" description="Fatty-acid amide hydrolase 2">
    <location>
        <begin position="1"/>
        <end position="532"/>
    </location>
</feature>
<feature type="transmembrane region" description="Helical" evidence="2">
    <location>
        <begin position="11"/>
        <end position="31"/>
    </location>
</feature>
<feature type="active site" description="Charge relay system" evidence="1">
    <location>
        <position position="131"/>
    </location>
</feature>
<feature type="active site" description="Charge relay system" evidence="1">
    <location>
        <position position="206"/>
    </location>
</feature>
<feature type="active site" description="Acyl-ester intermediate" evidence="1">
    <location>
        <position position="230"/>
    </location>
</feature>
<feature type="sequence conflict" description="In Ref. 1; BAB71007." evidence="5" ref="1">
    <original>K</original>
    <variation>R</variation>
    <location>
        <position position="98"/>
    </location>
</feature>
<gene>
    <name type="primary">FAAH2</name>
    <name type="synonym">AMDD</name>
</gene>
<name>FAAH2_HUMAN</name>